<gene>
    <name type="primary">IQSEC3</name>
    <name type="synonym">KIAA1110</name>
</gene>
<reference key="1">
    <citation type="journal article" date="2004" name="Nat. Genet.">
        <title>Complete sequencing and characterization of 21,243 full-length human cDNAs.</title>
        <authorList>
            <person name="Ota T."/>
            <person name="Suzuki Y."/>
            <person name="Nishikawa T."/>
            <person name="Otsuki T."/>
            <person name="Sugiyama T."/>
            <person name="Irie R."/>
            <person name="Wakamatsu A."/>
            <person name="Hayashi K."/>
            <person name="Sato H."/>
            <person name="Nagai K."/>
            <person name="Kimura K."/>
            <person name="Makita H."/>
            <person name="Sekine M."/>
            <person name="Obayashi M."/>
            <person name="Nishi T."/>
            <person name="Shibahara T."/>
            <person name="Tanaka T."/>
            <person name="Ishii S."/>
            <person name="Yamamoto J."/>
            <person name="Saito K."/>
            <person name="Kawai Y."/>
            <person name="Isono Y."/>
            <person name="Nakamura Y."/>
            <person name="Nagahari K."/>
            <person name="Murakami K."/>
            <person name="Yasuda T."/>
            <person name="Iwayanagi T."/>
            <person name="Wagatsuma M."/>
            <person name="Shiratori A."/>
            <person name="Sudo H."/>
            <person name="Hosoiri T."/>
            <person name="Kaku Y."/>
            <person name="Kodaira H."/>
            <person name="Kondo H."/>
            <person name="Sugawara M."/>
            <person name="Takahashi M."/>
            <person name="Kanda K."/>
            <person name="Yokoi T."/>
            <person name="Furuya T."/>
            <person name="Kikkawa E."/>
            <person name="Omura Y."/>
            <person name="Abe K."/>
            <person name="Kamihara K."/>
            <person name="Katsuta N."/>
            <person name="Sato K."/>
            <person name="Tanikawa M."/>
            <person name="Yamazaki M."/>
            <person name="Ninomiya K."/>
            <person name="Ishibashi T."/>
            <person name="Yamashita H."/>
            <person name="Murakawa K."/>
            <person name="Fujimori K."/>
            <person name="Tanai H."/>
            <person name="Kimata M."/>
            <person name="Watanabe M."/>
            <person name="Hiraoka S."/>
            <person name="Chiba Y."/>
            <person name="Ishida S."/>
            <person name="Ono Y."/>
            <person name="Takiguchi S."/>
            <person name="Watanabe S."/>
            <person name="Yosida M."/>
            <person name="Hotuta T."/>
            <person name="Kusano J."/>
            <person name="Kanehori K."/>
            <person name="Takahashi-Fujii A."/>
            <person name="Hara H."/>
            <person name="Tanase T.-O."/>
            <person name="Nomura Y."/>
            <person name="Togiya S."/>
            <person name="Komai F."/>
            <person name="Hara R."/>
            <person name="Takeuchi K."/>
            <person name="Arita M."/>
            <person name="Imose N."/>
            <person name="Musashino K."/>
            <person name="Yuuki H."/>
            <person name="Oshima A."/>
            <person name="Sasaki N."/>
            <person name="Aotsuka S."/>
            <person name="Yoshikawa Y."/>
            <person name="Matsunawa H."/>
            <person name="Ichihara T."/>
            <person name="Shiohata N."/>
            <person name="Sano S."/>
            <person name="Moriya S."/>
            <person name="Momiyama H."/>
            <person name="Satoh N."/>
            <person name="Takami S."/>
            <person name="Terashima Y."/>
            <person name="Suzuki O."/>
            <person name="Nakagawa S."/>
            <person name="Senoh A."/>
            <person name="Mizoguchi H."/>
            <person name="Goto Y."/>
            <person name="Shimizu F."/>
            <person name="Wakebe H."/>
            <person name="Hishigaki H."/>
            <person name="Watanabe T."/>
            <person name="Sugiyama A."/>
            <person name="Takemoto M."/>
            <person name="Kawakami B."/>
            <person name="Yamazaki M."/>
            <person name="Watanabe K."/>
            <person name="Kumagai A."/>
            <person name="Itakura S."/>
            <person name="Fukuzumi Y."/>
            <person name="Fujimori Y."/>
            <person name="Komiyama M."/>
            <person name="Tashiro H."/>
            <person name="Tanigami A."/>
            <person name="Fujiwara T."/>
            <person name="Ono T."/>
            <person name="Yamada K."/>
            <person name="Fujii Y."/>
            <person name="Ozaki K."/>
            <person name="Hirao M."/>
            <person name="Ohmori Y."/>
            <person name="Kawabata A."/>
            <person name="Hikiji T."/>
            <person name="Kobatake N."/>
            <person name="Inagaki H."/>
            <person name="Ikema Y."/>
            <person name="Okamoto S."/>
            <person name="Okitani R."/>
            <person name="Kawakami T."/>
            <person name="Noguchi S."/>
            <person name="Itoh T."/>
            <person name="Shigeta K."/>
            <person name="Senba T."/>
            <person name="Matsumura K."/>
            <person name="Nakajima Y."/>
            <person name="Mizuno T."/>
            <person name="Morinaga M."/>
            <person name="Sasaki M."/>
            <person name="Togashi T."/>
            <person name="Oyama M."/>
            <person name="Hata H."/>
            <person name="Watanabe M."/>
            <person name="Komatsu T."/>
            <person name="Mizushima-Sugano J."/>
            <person name="Satoh T."/>
            <person name="Shirai Y."/>
            <person name="Takahashi Y."/>
            <person name="Nakagawa K."/>
            <person name="Okumura K."/>
            <person name="Nagase T."/>
            <person name="Nomura N."/>
            <person name="Kikuchi H."/>
            <person name="Masuho Y."/>
            <person name="Yamashita R."/>
            <person name="Nakai K."/>
            <person name="Yada T."/>
            <person name="Nakamura Y."/>
            <person name="Ohara O."/>
            <person name="Isogai T."/>
            <person name="Sugano S."/>
        </authorList>
    </citation>
    <scope>NUCLEOTIDE SEQUENCE [LARGE SCALE MRNA] (ISOFORM 2)</scope>
</reference>
<reference key="2">
    <citation type="journal article" date="2006" name="Nature">
        <title>The finished DNA sequence of human chromosome 12.</title>
        <authorList>
            <person name="Scherer S.E."/>
            <person name="Muzny D.M."/>
            <person name="Buhay C.J."/>
            <person name="Chen R."/>
            <person name="Cree A."/>
            <person name="Ding Y."/>
            <person name="Dugan-Rocha S."/>
            <person name="Gill R."/>
            <person name="Gunaratne P."/>
            <person name="Harris R.A."/>
            <person name="Hawes A.C."/>
            <person name="Hernandez J."/>
            <person name="Hodgson A.V."/>
            <person name="Hume J."/>
            <person name="Jackson A."/>
            <person name="Khan Z.M."/>
            <person name="Kovar-Smith C."/>
            <person name="Lewis L.R."/>
            <person name="Lozado R.J."/>
            <person name="Metzker M.L."/>
            <person name="Milosavljevic A."/>
            <person name="Miner G.R."/>
            <person name="Montgomery K.T."/>
            <person name="Morgan M.B."/>
            <person name="Nazareth L.V."/>
            <person name="Scott G."/>
            <person name="Sodergren E."/>
            <person name="Song X.-Z."/>
            <person name="Steffen D."/>
            <person name="Lovering R.C."/>
            <person name="Wheeler D.A."/>
            <person name="Worley K.C."/>
            <person name="Yuan Y."/>
            <person name="Zhang Z."/>
            <person name="Adams C.Q."/>
            <person name="Ansari-Lari M.A."/>
            <person name="Ayele M."/>
            <person name="Brown M.J."/>
            <person name="Chen G."/>
            <person name="Chen Z."/>
            <person name="Clerc-Blankenburg K.P."/>
            <person name="Davis C."/>
            <person name="Delgado O."/>
            <person name="Dinh H.H."/>
            <person name="Draper H."/>
            <person name="Gonzalez-Garay M.L."/>
            <person name="Havlak P."/>
            <person name="Jackson L.R."/>
            <person name="Jacob L.S."/>
            <person name="Kelly S.H."/>
            <person name="Li L."/>
            <person name="Li Z."/>
            <person name="Liu J."/>
            <person name="Liu W."/>
            <person name="Lu J."/>
            <person name="Maheshwari M."/>
            <person name="Nguyen B.-V."/>
            <person name="Okwuonu G.O."/>
            <person name="Pasternak S."/>
            <person name="Perez L.M."/>
            <person name="Plopper F.J.H."/>
            <person name="Santibanez J."/>
            <person name="Shen H."/>
            <person name="Tabor P.E."/>
            <person name="Verduzco D."/>
            <person name="Waldron L."/>
            <person name="Wang Q."/>
            <person name="Williams G.A."/>
            <person name="Zhang J."/>
            <person name="Zhou J."/>
            <person name="Allen C.C."/>
            <person name="Amin A.G."/>
            <person name="Anyalebechi V."/>
            <person name="Bailey M."/>
            <person name="Barbaria J.A."/>
            <person name="Bimage K.E."/>
            <person name="Bryant N.P."/>
            <person name="Burch P.E."/>
            <person name="Burkett C.E."/>
            <person name="Burrell K.L."/>
            <person name="Calderon E."/>
            <person name="Cardenas V."/>
            <person name="Carter K."/>
            <person name="Casias K."/>
            <person name="Cavazos I."/>
            <person name="Cavazos S.R."/>
            <person name="Ceasar H."/>
            <person name="Chacko J."/>
            <person name="Chan S.N."/>
            <person name="Chavez D."/>
            <person name="Christopoulos C."/>
            <person name="Chu J."/>
            <person name="Cockrell R."/>
            <person name="Cox C.D."/>
            <person name="Dang M."/>
            <person name="Dathorne S.R."/>
            <person name="David R."/>
            <person name="Davis C.M."/>
            <person name="Davy-Carroll L."/>
            <person name="Deshazo D.R."/>
            <person name="Donlin J.E."/>
            <person name="D'Souza L."/>
            <person name="Eaves K.A."/>
            <person name="Egan A."/>
            <person name="Emery-Cohen A.J."/>
            <person name="Escotto M."/>
            <person name="Flagg N."/>
            <person name="Forbes L.D."/>
            <person name="Gabisi A.M."/>
            <person name="Garza M."/>
            <person name="Hamilton C."/>
            <person name="Henderson N."/>
            <person name="Hernandez O."/>
            <person name="Hines S."/>
            <person name="Hogues M.E."/>
            <person name="Huang M."/>
            <person name="Idlebird D.G."/>
            <person name="Johnson R."/>
            <person name="Jolivet A."/>
            <person name="Jones S."/>
            <person name="Kagan R."/>
            <person name="King L.M."/>
            <person name="Leal B."/>
            <person name="Lebow H."/>
            <person name="Lee S."/>
            <person name="LeVan J.M."/>
            <person name="Lewis L.C."/>
            <person name="London P."/>
            <person name="Lorensuhewa L.M."/>
            <person name="Loulseged H."/>
            <person name="Lovett D.A."/>
            <person name="Lucier A."/>
            <person name="Lucier R.L."/>
            <person name="Ma J."/>
            <person name="Madu R.C."/>
            <person name="Mapua P."/>
            <person name="Martindale A.D."/>
            <person name="Martinez E."/>
            <person name="Massey E."/>
            <person name="Mawhiney S."/>
            <person name="Meador M.G."/>
            <person name="Mendez S."/>
            <person name="Mercado C."/>
            <person name="Mercado I.C."/>
            <person name="Merritt C.E."/>
            <person name="Miner Z.L."/>
            <person name="Minja E."/>
            <person name="Mitchell T."/>
            <person name="Mohabbat F."/>
            <person name="Mohabbat K."/>
            <person name="Montgomery B."/>
            <person name="Moore N."/>
            <person name="Morris S."/>
            <person name="Munidasa M."/>
            <person name="Ngo R.N."/>
            <person name="Nguyen N.B."/>
            <person name="Nickerson E."/>
            <person name="Nwaokelemeh O.O."/>
            <person name="Nwokenkwo S."/>
            <person name="Obregon M."/>
            <person name="Oguh M."/>
            <person name="Oragunye N."/>
            <person name="Oviedo R.J."/>
            <person name="Parish B.J."/>
            <person name="Parker D.N."/>
            <person name="Parrish J."/>
            <person name="Parks K.L."/>
            <person name="Paul H.A."/>
            <person name="Payton B.A."/>
            <person name="Perez A."/>
            <person name="Perrin W."/>
            <person name="Pickens A."/>
            <person name="Primus E.L."/>
            <person name="Pu L.-L."/>
            <person name="Puazo M."/>
            <person name="Quiles M.M."/>
            <person name="Quiroz J.B."/>
            <person name="Rabata D."/>
            <person name="Reeves K."/>
            <person name="Ruiz S.J."/>
            <person name="Shao H."/>
            <person name="Sisson I."/>
            <person name="Sonaike T."/>
            <person name="Sorelle R.P."/>
            <person name="Sutton A.E."/>
            <person name="Svatek A.F."/>
            <person name="Svetz L.A."/>
            <person name="Tamerisa K.S."/>
            <person name="Taylor T.R."/>
            <person name="Teague B."/>
            <person name="Thomas N."/>
            <person name="Thorn R.D."/>
            <person name="Trejos Z.Y."/>
            <person name="Trevino B.K."/>
            <person name="Ukegbu O.N."/>
            <person name="Urban J.B."/>
            <person name="Vasquez L.I."/>
            <person name="Vera V.A."/>
            <person name="Villasana D.M."/>
            <person name="Wang L."/>
            <person name="Ward-Moore S."/>
            <person name="Warren J.T."/>
            <person name="Wei X."/>
            <person name="White F."/>
            <person name="Williamson A.L."/>
            <person name="Wleczyk R."/>
            <person name="Wooden H.S."/>
            <person name="Wooden S.H."/>
            <person name="Yen J."/>
            <person name="Yoon L."/>
            <person name="Yoon V."/>
            <person name="Zorrilla S.E."/>
            <person name="Nelson D."/>
            <person name="Kucherlapati R."/>
            <person name="Weinstock G."/>
            <person name="Gibbs R.A."/>
        </authorList>
    </citation>
    <scope>NUCLEOTIDE SEQUENCE [LARGE SCALE GENOMIC DNA]</scope>
</reference>
<reference key="3">
    <citation type="journal article" date="2004" name="Genome Res.">
        <title>The status, quality, and expansion of the NIH full-length cDNA project: the Mammalian Gene Collection (MGC).</title>
        <authorList>
            <consortium name="The MGC Project Team"/>
        </authorList>
    </citation>
    <scope>NUCLEOTIDE SEQUENCE [LARGE SCALE MRNA] (ISOFORM 1)</scope>
    <source>
        <tissue>Brain</tissue>
    </source>
</reference>
<reference key="4">
    <citation type="journal article" date="1999" name="DNA Res.">
        <title>Prediction of the coding sequences of unidentified human genes. XIV. The complete sequences of 100 new cDNA clones from brain which code for large proteins in vitro.</title>
        <authorList>
            <person name="Kikuno R."/>
            <person name="Nagase T."/>
            <person name="Ishikawa K."/>
            <person name="Hirosawa M."/>
            <person name="Miyajima N."/>
            <person name="Tanaka A."/>
            <person name="Kotani H."/>
            <person name="Nomura N."/>
            <person name="Ohara O."/>
        </authorList>
    </citation>
    <scope>NUCLEOTIDE SEQUENCE [LARGE SCALE MRNA] OF 443-1182 (ISOFORM 1)</scope>
    <scope>VARIANT GLY-558</scope>
    <source>
        <tissue>Brain</tissue>
    </source>
</reference>
<reference key="5">
    <citation type="journal article" date="2007" name="Biochem. Biophys. Res. Commun.">
        <title>Identification of a neuron-specific human gene, KIAA1110, that is a guanine nucleotide exchange factor for ARF1.</title>
        <authorList>
            <person name="Hattori Y."/>
            <person name="Ohta S."/>
            <person name="Hamada K."/>
            <person name="Yamada-Okabe H."/>
            <person name="Kanemura Y."/>
            <person name="Matsuzaki Y."/>
            <person name="Okano H."/>
            <person name="Kawakami Y."/>
            <person name="Toda M."/>
        </authorList>
    </citation>
    <scope>FUNCTION</scope>
    <scope>SUBCELLULAR LOCATION</scope>
    <scope>TISSUE SPECIFICITY</scope>
</reference>
<dbReference type="EMBL" id="AK091953">
    <property type="status" value="NOT_ANNOTATED_CDS"/>
    <property type="molecule type" value="mRNA"/>
</dbReference>
<dbReference type="EMBL" id="AC007406">
    <property type="status" value="NOT_ANNOTATED_CDS"/>
    <property type="molecule type" value="Genomic_DNA"/>
</dbReference>
<dbReference type="EMBL" id="AC026369">
    <property type="status" value="NOT_ANNOTATED_CDS"/>
    <property type="molecule type" value="Genomic_DNA"/>
</dbReference>
<dbReference type="EMBL" id="BC024764">
    <property type="protein sequence ID" value="AAH24764.1"/>
    <property type="molecule type" value="mRNA"/>
</dbReference>
<dbReference type="EMBL" id="BC042067">
    <property type="status" value="NOT_ANNOTATED_CDS"/>
    <property type="molecule type" value="mRNA"/>
</dbReference>
<dbReference type="EMBL" id="AB029033">
    <property type="protein sequence ID" value="BAA83062.1"/>
    <property type="molecule type" value="mRNA"/>
</dbReference>
<dbReference type="CCDS" id="CCDS31725.1">
    <molecule id="Q9UPP2-2"/>
</dbReference>
<dbReference type="CCDS" id="CCDS53728.1">
    <molecule id="Q9UPP2-1"/>
</dbReference>
<dbReference type="RefSeq" id="NP_001164209.1">
    <molecule id="Q9UPP2-1"/>
    <property type="nucleotide sequence ID" value="NM_001170738.2"/>
</dbReference>
<dbReference type="RefSeq" id="NP_056047.1">
    <molecule id="Q9UPP2-2"/>
    <property type="nucleotide sequence ID" value="NM_015232.2"/>
</dbReference>
<dbReference type="SMR" id="Q9UPP2"/>
<dbReference type="BioGRID" id="136270">
    <property type="interactions" value="3"/>
</dbReference>
<dbReference type="FunCoup" id="Q9UPP2">
    <property type="interactions" value="593"/>
</dbReference>
<dbReference type="IntAct" id="Q9UPP2">
    <property type="interactions" value="1"/>
</dbReference>
<dbReference type="STRING" id="9606.ENSP00000437554"/>
<dbReference type="GlyGen" id="Q9UPP2">
    <property type="glycosylation" value="2 sites, 1 O-linked glycan (1 site)"/>
</dbReference>
<dbReference type="iPTMnet" id="Q9UPP2"/>
<dbReference type="PhosphoSitePlus" id="Q9UPP2"/>
<dbReference type="BioMuta" id="IQSEC3"/>
<dbReference type="DMDM" id="215274117"/>
<dbReference type="jPOST" id="Q9UPP2"/>
<dbReference type="MassIVE" id="Q9UPP2"/>
<dbReference type="PaxDb" id="9606-ENSP00000437554"/>
<dbReference type="PeptideAtlas" id="Q9UPP2"/>
<dbReference type="ProteomicsDB" id="85398">
    <molecule id="Q9UPP2-1"/>
</dbReference>
<dbReference type="ProteomicsDB" id="85399">
    <molecule id="Q9UPP2-2"/>
</dbReference>
<dbReference type="Antibodypedia" id="50062">
    <property type="antibodies" value="63 antibodies from 14 providers"/>
</dbReference>
<dbReference type="DNASU" id="440073"/>
<dbReference type="Ensembl" id="ENST00000382841.2">
    <molecule id="Q9UPP2-2"/>
    <property type="protein sequence ID" value="ENSP00000372292.2"/>
    <property type="gene ID" value="ENSG00000120645.12"/>
</dbReference>
<dbReference type="Ensembl" id="ENST00000538872.6">
    <molecule id="Q9UPP2-1"/>
    <property type="protein sequence ID" value="ENSP00000437554.1"/>
    <property type="gene ID" value="ENSG00000120645.12"/>
</dbReference>
<dbReference type="Ensembl" id="ENST00000571363.2">
    <molecule id="Q9UPP2-2"/>
    <property type="protein sequence ID" value="ENSP00000461043.1"/>
    <property type="gene ID" value="ENSG00000262607.5"/>
</dbReference>
<dbReference type="GeneID" id="440073"/>
<dbReference type="KEGG" id="hsa:440073"/>
<dbReference type="MANE-Select" id="ENST00000538872.6">
    <property type="protein sequence ID" value="ENSP00000437554.1"/>
    <property type="RefSeq nucleotide sequence ID" value="NM_001170738.2"/>
    <property type="RefSeq protein sequence ID" value="NP_001164209.1"/>
</dbReference>
<dbReference type="UCSC" id="uc001qhu.2">
    <molecule id="Q9UPP2-1"/>
    <property type="organism name" value="human"/>
</dbReference>
<dbReference type="AGR" id="HGNC:29193"/>
<dbReference type="CTD" id="440073"/>
<dbReference type="DisGeNET" id="440073"/>
<dbReference type="GeneCards" id="IQSEC3"/>
<dbReference type="HGNC" id="HGNC:29193">
    <property type="gene designation" value="IQSEC3"/>
</dbReference>
<dbReference type="HPA" id="ENSG00000120645">
    <property type="expression patterns" value="Tissue enriched (brain)"/>
</dbReference>
<dbReference type="MIM" id="612118">
    <property type="type" value="gene"/>
</dbReference>
<dbReference type="neXtProt" id="NX_Q9UPP2"/>
<dbReference type="OpenTargets" id="ENSG00000120645"/>
<dbReference type="PharmGKB" id="PA134990290"/>
<dbReference type="VEuPathDB" id="HostDB:ENSG00000120645"/>
<dbReference type="eggNOG" id="KOG0931">
    <property type="taxonomic scope" value="Eukaryota"/>
</dbReference>
<dbReference type="GeneTree" id="ENSGT00940000155908"/>
<dbReference type="HOGENOM" id="CLU_004328_2_0_1"/>
<dbReference type="InParanoid" id="Q9UPP2"/>
<dbReference type="OMA" id="QALTCYA"/>
<dbReference type="OrthoDB" id="430364at2759"/>
<dbReference type="PAN-GO" id="Q9UPP2">
    <property type="GO annotations" value="1 GO annotation based on evolutionary models"/>
</dbReference>
<dbReference type="PhylomeDB" id="Q9UPP2"/>
<dbReference type="TreeFam" id="TF323811"/>
<dbReference type="PathwayCommons" id="Q9UPP2"/>
<dbReference type="Reactome" id="R-HSA-9768919">
    <property type="pathway name" value="NPAS4 regulates expression of target genes"/>
</dbReference>
<dbReference type="SignaLink" id="Q9UPP2"/>
<dbReference type="BioGRID-ORCS" id="440073">
    <property type="hits" value="10 hits in 1152 CRISPR screens"/>
</dbReference>
<dbReference type="CD-CODE" id="FB4E32DD">
    <property type="entry name" value="Presynaptic clusters and postsynaptic densities"/>
</dbReference>
<dbReference type="ChiTaRS" id="IQSEC3">
    <property type="organism name" value="human"/>
</dbReference>
<dbReference type="GenomeRNAi" id="440073"/>
<dbReference type="Pharos" id="Q9UPP2">
    <property type="development level" value="Tbio"/>
</dbReference>
<dbReference type="PRO" id="PR:Q9UPP2"/>
<dbReference type="Proteomes" id="UP000005640">
    <property type="component" value="Chromosome 12"/>
</dbReference>
<dbReference type="RNAct" id="Q9UPP2">
    <property type="molecule type" value="protein"/>
</dbReference>
<dbReference type="Bgee" id="ENSG00000120645">
    <property type="expression patterns" value="Expressed in right hemisphere of cerebellum and 137 other cell types or tissues"/>
</dbReference>
<dbReference type="GO" id="GO:0005829">
    <property type="term" value="C:cytosol"/>
    <property type="evidence" value="ECO:0000314"/>
    <property type="project" value="HPA"/>
</dbReference>
<dbReference type="GO" id="GO:0098982">
    <property type="term" value="C:GABA-ergic synapse"/>
    <property type="evidence" value="ECO:0007669"/>
    <property type="project" value="Ensembl"/>
</dbReference>
<dbReference type="GO" id="GO:0098690">
    <property type="term" value="C:glycinergic synapse"/>
    <property type="evidence" value="ECO:0007669"/>
    <property type="project" value="Ensembl"/>
</dbReference>
<dbReference type="GO" id="GO:0060077">
    <property type="term" value="C:inhibitory synapse"/>
    <property type="evidence" value="ECO:0007669"/>
    <property type="project" value="Ensembl"/>
</dbReference>
<dbReference type="GO" id="GO:0005654">
    <property type="term" value="C:nucleoplasm"/>
    <property type="evidence" value="ECO:0000314"/>
    <property type="project" value="HPA"/>
</dbReference>
<dbReference type="GO" id="GO:0014069">
    <property type="term" value="C:postsynaptic density"/>
    <property type="evidence" value="ECO:0000250"/>
    <property type="project" value="UniProtKB"/>
</dbReference>
<dbReference type="GO" id="GO:0045211">
    <property type="term" value="C:postsynaptic membrane"/>
    <property type="evidence" value="ECO:0007669"/>
    <property type="project" value="Ensembl"/>
</dbReference>
<dbReference type="GO" id="GO:0099629">
    <property type="term" value="C:postsynaptic specialization of symmetric synapse"/>
    <property type="evidence" value="ECO:0007669"/>
    <property type="project" value="Ensembl"/>
</dbReference>
<dbReference type="GO" id="GO:0005085">
    <property type="term" value="F:guanyl-nucleotide exchange factor activity"/>
    <property type="evidence" value="ECO:0007669"/>
    <property type="project" value="InterPro"/>
</dbReference>
<dbReference type="GO" id="GO:0030036">
    <property type="term" value="P:actin cytoskeleton organization"/>
    <property type="evidence" value="ECO:0000318"/>
    <property type="project" value="GO_Central"/>
</dbReference>
<dbReference type="GO" id="GO:0032012">
    <property type="term" value="P:regulation of ARF protein signal transduction"/>
    <property type="evidence" value="ECO:0007669"/>
    <property type="project" value="InterPro"/>
</dbReference>
<dbReference type="CDD" id="cd14686">
    <property type="entry name" value="bZIP"/>
    <property type="match status" value="1"/>
</dbReference>
<dbReference type="CDD" id="cd13318">
    <property type="entry name" value="PH_IQSEC"/>
    <property type="match status" value="1"/>
</dbReference>
<dbReference type="CDD" id="cd00171">
    <property type="entry name" value="Sec7"/>
    <property type="match status" value="1"/>
</dbReference>
<dbReference type="FunFam" id="1.10.1000.11:FF:000001">
    <property type="entry name" value="IQ motif and SEC7 domain-containing protein 1"/>
    <property type="match status" value="1"/>
</dbReference>
<dbReference type="FunFam" id="1.10.220.20:FF:000001">
    <property type="entry name" value="IQ motif and SEC7 domain-containing protein 1"/>
    <property type="match status" value="1"/>
</dbReference>
<dbReference type="FunFam" id="2.30.29.30:FF:000096">
    <property type="entry name" value="IQ motif and SEC7 domain-containing protein 3"/>
    <property type="match status" value="1"/>
</dbReference>
<dbReference type="Gene3D" id="1.10.220.20">
    <property type="match status" value="1"/>
</dbReference>
<dbReference type="Gene3D" id="1.10.1000.11">
    <property type="entry name" value="Arf Nucleotide-binding Site Opener,domain 2"/>
    <property type="match status" value="1"/>
</dbReference>
<dbReference type="Gene3D" id="2.30.29.30">
    <property type="entry name" value="Pleckstrin-homology domain (PH domain)/Phosphotyrosine-binding domain (PTB)"/>
    <property type="match status" value="1"/>
</dbReference>
<dbReference type="InterPro" id="IPR033742">
    <property type="entry name" value="IQSEC_PH"/>
</dbReference>
<dbReference type="InterPro" id="IPR011993">
    <property type="entry name" value="PH-like_dom_sf"/>
</dbReference>
<dbReference type="InterPro" id="IPR023394">
    <property type="entry name" value="Sec7_C_sf"/>
</dbReference>
<dbReference type="InterPro" id="IPR000904">
    <property type="entry name" value="Sec7_dom"/>
</dbReference>
<dbReference type="InterPro" id="IPR035999">
    <property type="entry name" value="Sec7_dom_sf"/>
</dbReference>
<dbReference type="PANTHER" id="PTHR10663">
    <property type="entry name" value="GUANYL-NUCLEOTIDE EXCHANGE FACTOR"/>
    <property type="match status" value="1"/>
</dbReference>
<dbReference type="PANTHER" id="PTHR10663:SF318">
    <property type="entry name" value="IQ MOTIF AND SEC7 DOMAIN-CONTAINING PROTEIN 3"/>
    <property type="match status" value="1"/>
</dbReference>
<dbReference type="Pfam" id="PF16453">
    <property type="entry name" value="IQ_SEC7_PH"/>
    <property type="match status" value="1"/>
</dbReference>
<dbReference type="Pfam" id="PF01369">
    <property type="entry name" value="Sec7"/>
    <property type="match status" value="1"/>
</dbReference>
<dbReference type="SMART" id="SM00222">
    <property type="entry name" value="Sec7"/>
    <property type="match status" value="1"/>
</dbReference>
<dbReference type="SUPFAM" id="SSF50729">
    <property type="entry name" value="PH domain-like"/>
    <property type="match status" value="1"/>
</dbReference>
<dbReference type="SUPFAM" id="SSF48425">
    <property type="entry name" value="Sec7 domain"/>
    <property type="match status" value="1"/>
</dbReference>
<dbReference type="PROSITE" id="PS50096">
    <property type="entry name" value="IQ"/>
    <property type="match status" value="1"/>
</dbReference>
<dbReference type="PROSITE" id="PS50190">
    <property type="entry name" value="SEC7"/>
    <property type="match status" value="1"/>
</dbReference>
<name>IQEC3_HUMAN</name>
<accession>Q9UPP2</accession>
<accession>A6NIF2</accession>
<accession>A6NKV9</accession>
<accession>Q8TB43</accession>
<evidence type="ECO:0000250" key="1">
    <source>
        <dbReference type="UniProtKB" id="Q3TES0"/>
    </source>
</evidence>
<evidence type="ECO:0000250" key="2">
    <source>
        <dbReference type="UniProtKB" id="Q76M68"/>
    </source>
</evidence>
<evidence type="ECO:0000255" key="3"/>
<evidence type="ECO:0000255" key="4">
    <source>
        <dbReference type="PROSITE-ProRule" id="PRU00116"/>
    </source>
</evidence>
<evidence type="ECO:0000255" key="5">
    <source>
        <dbReference type="PROSITE-ProRule" id="PRU00189"/>
    </source>
</evidence>
<evidence type="ECO:0000256" key="6">
    <source>
        <dbReference type="SAM" id="MobiDB-lite"/>
    </source>
</evidence>
<evidence type="ECO:0000269" key="7">
    <source>
    </source>
</evidence>
<evidence type="ECO:0000269" key="8">
    <source>
    </source>
</evidence>
<evidence type="ECO:0000303" key="9">
    <source>
    </source>
</evidence>
<evidence type="ECO:0000305" key="10"/>
<protein>
    <recommendedName>
        <fullName>IQ motif and SEC7 domain-containing protein 3</fullName>
    </recommendedName>
</protein>
<comment type="function">
    <text evidence="8">Acts as a guanine nucleotide exchange factor (GEF) for ARF1.</text>
</comment>
<comment type="subunit">
    <text evidence="1 2">Interacts with DLG1 and DLG4 (By similarity). Interacts with GPHN (By similarity).</text>
</comment>
<comment type="subcellular location">
    <subcellularLocation>
        <location evidence="8">Cytoplasm</location>
    </subcellularLocation>
    <subcellularLocation>
        <location evidence="1">Postsynaptic density</location>
    </subcellularLocation>
</comment>
<comment type="alternative products">
    <event type="alternative splicing"/>
    <isoform>
        <id>Q9UPP2-1</id>
        <name>1</name>
        <sequence type="displayed"/>
    </isoform>
    <isoform>
        <id>Q9UPP2-2</id>
        <name>2</name>
        <sequence type="described" ref="VSP_035695 VSP_035696 VSP_035697"/>
    </isoform>
</comment>
<comment type="tissue specificity">
    <text evidence="8">Expressed specifically in the adult brain, predominantly in the cerebral cortex and the olfactory bulb, but not in the fetal brain. Expressed only in mature neurons, but not in undifferentiated neural stem precursor cells (NSPCs), nor in glioma cells.</text>
</comment>
<comment type="similarity">
    <text evidence="10">Belongs to the BRAG family.</text>
</comment>
<organism>
    <name type="scientific">Homo sapiens</name>
    <name type="common">Human</name>
    <dbReference type="NCBI Taxonomy" id="9606"/>
    <lineage>
        <taxon>Eukaryota</taxon>
        <taxon>Metazoa</taxon>
        <taxon>Chordata</taxon>
        <taxon>Craniata</taxon>
        <taxon>Vertebrata</taxon>
        <taxon>Euteleostomi</taxon>
        <taxon>Mammalia</taxon>
        <taxon>Eutheria</taxon>
        <taxon>Euarchontoglires</taxon>
        <taxon>Primates</taxon>
        <taxon>Haplorrhini</taxon>
        <taxon>Catarrhini</taxon>
        <taxon>Hominidae</taxon>
        <taxon>Homo</taxon>
    </lineage>
</organism>
<feature type="chain" id="PRO_0000245610" description="IQ motif and SEC7 domain-containing protein 3">
    <location>
        <begin position="1"/>
        <end position="1182"/>
    </location>
</feature>
<feature type="domain" description="IQ" evidence="4">
    <location>
        <begin position="315"/>
        <end position="344"/>
    </location>
</feature>
<feature type="domain" description="SEC7" evidence="5">
    <location>
        <begin position="644"/>
        <end position="837"/>
    </location>
</feature>
<feature type="domain" description="PH">
    <location>
        <begin position="850"/>
        <end position="983"/>
    </location>
</feature>
<feature type="region of interest" description="Disordered" evidence="6">
    <location>
        <begin position="62"/>
        <end position="157"/>
    </location>
</feature>
<feature type="region of interest" description="Disordered" evidence="6">
    <location>
        <begin position="230"/>
        <end position="275"/>
    </location>
</feature>
<feature type="region of interest" description="Disordered" evidence="6">
    <location>
        <begin position="444"/>
        <end position="479"/>
    </location>
</feature>
<feature type="region of interest" description="Disordered" evidence="6">
    <location>
        <begin position="521"/>
        <end position="616"/>
    </location>
</feature>
<feature type="region of interest" description="Disordered" evidence="6">
    <location>
        <begin position="1002"/>
        <end position="1090"/>
    </location>
</feature>
<feature type="region of interest" description="Disordered" evidence="6">
    <location>
        <begin position="1121"/>
        <end position="1182"/>
    </location>
</feature>
<feature type="coiled-coil region" evidence="3">
    <location>
        <begin position="20"/>
        <end position="56"/>
    </location>
</feature>
<feature type="coiled-coil region" evidence="3">
    <location>
        <begin position="964"/>
        <end position="992"/>
    </location>
</feature>
<feature type="compositionally biased region" description="Pro residues" evidence="6">
    <location>
        <begin position="63"/>
        <end position="78"/>
    </location>
</feature>
<feature type="compositionally biased region" description="Low complexity" evidence="6">
    <location>
        <begin position="79"/>
        <end position="105"/>
    </location>
</feature>
<feature type="compositionally biased region" description="Low complexity" evidence="6">
    <location>
        <begin position="254"/>
        <end position="263"/>
    </location>
</feature>
<feature type="compositionally biased region" description="Basic and acidic residues" evidence="6">
    <location>
        <begin position="533"/>
        <end position="548"/>
    </location>
</feature>
<feature type="compositionally biased region" description="Low complexity" evidence="6">
    <location>
        <begin position="555"/>
        <end position="569"/>
    </location>
</feature>
<feature type="compositionally biased region" description="Acidic residues" evidence="6">
    <location>
        <begin position="572"/>
        <end position="581"/>
    </location>
</feature>
<feature type="compositionally biased region" description="Low complexity" evidence="6">
    <location>
        <begin position="598"/>
        <end position="616"/>
    </location>
</feature>
<feature type="compositionally biased region" description="Basic and acidic residues" evidence="6">
    <location>
        <begin position="1022"/>
        <end position="1033"/>
    </location>
</feature>
<feature type="compositionally biased region" description="Polar residues" evidence="6">
    <location>
        <begin position="1043"/>
        <end position="1052"/>
    </location>
</feature>
<feature type="compositionally biased region" description="Pro residues" evidence="6">
    <location>
        <begin position="1061"/>
        <end position="1087"/>
    </location>
</feature>
<feature type="compositionally biased region" description="Low complexity" evidence="6">
    <location>
        <begin position="1121"/>
        <end position="1132"/>
    </location>
</feature>
<feature type="compositionally biased region" description="Pro residues" evidence="6">
    <location>
        <begin position="1147"/>
        <end position="1157"/>
    </location>
</feature>
<feature type="modified residue" description="Phosphoserine" evidence="1">
    <location>
        <position position="259"/>
    </location>
</feature>
<feature type="splice variant" id="VSP_035695" description="In isoform 2." evidence="9">
    <location>
        <begin position="1"/>
        <end position="303"/>
    </location>
</feature>
<feature type="splice variant" id="VSP_035696" description="In isoform 2." evidence="9">
    <original>SIHNRLQTSQHNSGLGAERGAPV</original>
    <variation>LINASPARLTILPISRDTIKSYC</variation>
    <location>
        <begin position="1040"/>
        <end position="1062"/>
    </location>
</feature>
<feature type="splice variant" id="VSP_035697" description="In isoform 2." evidence="9">
    <location>
        <begin position="1063"/>
        <end position="1182"/>
    </location>
</feature>
<feature type="sequence variant" id="VAR_061789" description="In dbSNP:rs56204927." evidence="7">
    <original>A</original>
    <variation>G</variation>
    <location>
        <position position="558"/>
    </location>
</feature>
<feature type="sequence conflict" description="In Ref. 3; AAH24764." evidence="10" ref="3">
    <original>T</original>
    <variation>S</variation>
    <location>
        <position position="31"/>
    </location>
</feature>
<feature type="sequence conflict" description="In Ref. 3; BC042067." evidence="10" ref="3">
    <original>P</original>
    <variation>S</variation>
    <location>
        <position position="283"/>
    </location>
</feature>
<feature type="sequence conflict" description="In Ref. 1; AK091953." evidence="10" ref="1">
    <original>E</original>
    <variation>K</variation>
    <location>
        <position position="397"/>
    </location>
</feature>
<feature type="sequence conflict" description="In Ref. 4; BAA83062." evidence="10" ref="4">
    <original>D</original>
    <variation>G</variation>
    <location>
        <position position="465"/>
    </location>
</feature>
<feature type="sequence conflict" description="In Ref. 1; AK091953." evidence="10" ref="1">
    <original>A</original>
    <variation>T</variation>
    <location>
        <position position="476"/>
    </location>
</feature>
<feature type="sequence conflict" description="In Ref. 1; AK091953." evidence="10" ref="1">
    <original>Q</original>
    <variation>H</variation>
    <location>
        <position position="514"/>
    </location>
</feature>
<keyword id="KW-0025">Alternative splicing</keyword>
<keyword id="KW-0175">Coiled coil</keyword>
<keyword id="KW-0963">Cytoplasm</keyword>
<keyword id="KW-0597">Phosphoprotein</keyword>
<keyword id="KW-1267">Proteomics identification</keyword>
<keyword id="KW-1185">Reference proteome</keyword>
<keyword id="KW-0770">Synapse</keyword>
<proteinExistence type="evidence at protein level"/>
<sequence>MESLLENPVRAVLYLKELTAIVQNQQSLIHTQRERIDELERRLDELSAENRSLWEHQQLLQAQPPPGLVPPSSAPLPAAPATAPAAAARAQEPLQDQGQRSAAAPHPAPDRPPRQHHGQLLEQPQRGPGSRAHTPQSPHKHLGTQGAVTDKEKERPPSCCAAAGALLQHKSPSALGKGVLSRRPENETVLHQFCCPAADACSDLASQSDGSCTQAGGGMEDSVVAAAAVAAGRPSAHAPKAQAQELQEEEERPGAGAASPRAGPQHKASPGRQQPALATALCPHAPAASDYELSLDLKNKQIEMLEHKYGGHLVSRRAACTIQTAFRQYQLSKNFEKIRNSLLESRLPRRISLRKVRSPTAESLAAEKALMEGYGLVGLPLVRSPSLPPTFAGTLTELEDSFTEQVQSLAKSIDDALSTWSLKTMCSLRESGAYQLHQALQAAAGPPGLEAEGRAPESAGPGPGDDAAETPGLPPAHSGTLMMAFRDVTVQIANQNISVSSSTALSVANCLGAQTVQAPAEPAAGKAEQGETSGREAPEAPAVGREDASAEDSCAEAAASGAADGATAPKTEEEEEEEETAEVGRGAEAEAGDLEQLSSSSTSTKSAKSGSEASASASKDALQAMILSLPRYHCENPASCKSPTLSTDTLRKRLYRIGLNLFNINPDKGIQFLISRGFIPDTPIGVAHFLLQRKGLSRQMIGEFLGNSKKQFNRDVLDCVVDEMDFSSMELDEALRKFQAHIRVQGEAQKVERLIEAFSQRYCMCNPEVVQQFHNPDTIFILAFAIILLNTDMYSPNIKPDRKMMLEDFIRNLRGVDDGADIPRELVVGIYERIQQKELKSNEDHVTYVTKVEKSIVGMKTVLSVPHRRLVCCSRLFEVTDVNKLQKQAAHQREVFLFNDLLVILKLCPKKKSSSTYTFCKSVGLLGMQFQLFENEYYSHGITLVTPLSGSEKKQVLHFCALGSDEMQKFVEDLKESIAEVTELEQIRIEWELEKQQGTKTLSFKPCGAQGDPQSKQGSPTAKREAALRERPAESTVEVSIHNRLQTSQHNSGLGAERGAPVPPPDLQPSPPRQQTPPLPPPPPTPPGTLVQCQQIVKVIVLDKPCLARMEPLLSQALSCYTSSSSDSCGSTPLGGPGSPVKVTHQPPLPPPPPPYNHPHQFCPPGSLLHGHRYSSGSRSLV</sequence>